<organism>
    <name type="scientific">Mycobacterium marinum (strain ATCC BAA-535 / M)</name>
    <dbReference type="NCBI Taxonomy" id="216594"/>
    <lineage>
        <taxon>Bacteria</taxon>
        <taxon>Bacillati</taxon>
        <taxon>Actinomycetota</taxon>
        <taxon>Actinomycetes</taxon>
        <taxon>Mycobacteriales</taxon>
        <taxon>Mycobacteriaceae</taxon>
        <taxon>Mycobacterium</taxon>
        <taxon>Mycobacterium ulcerans group</taxon>
    </lineage>
</organism>
<name>FBIA_MYCMM</name>
<comment type="function">
    <text evidence="1">Catalyzes the transfer of the phosphoenolpyruvate moiety from enoylpyruvoyl-2-diphospho-5'-guanosine (EPPG) to 7,8-didemethyl-8-hydroxy-5-deazariboflavin (FO) with the formation of dehydro coenzyme F420-0 and GMP.</text>
</comment>
<comment type="catalytic activity">
    <reaction evidence="1">
        <text>enolpyruvoyl-2-diphospho-5'-guanosine + 7,8-didemethyl-8-hydroxy-5-deazariboflavin = dehydro coenzyme F420-0 + GMP + H(+)</text>
        <dbReference type="Rhea" id="RHEA:27510"/>
        <dbReference type="ChEBI" id="CHEBI:15378"/>
        <dbReference type="ChEBI" id="CHEBI:58115"/>
        <dbReference type="ChEBI" id="CHEBI:59904"/>
        <dbReference type="ChEBI" id="CHEBI:143701"/>
        <dbReference type="ChEBI" id="CHEBI:143705"/>
        <dbReference type="EC" id="2.7.8.28"/>
    </reaction>
</comment>
<comment type="cofactor">
    <cofactor evidence="1">
        <name>Mg(2+)</name>
        <dbReference type="ChEBI" id="CHEBI:18420"/>
    </cofactor>
</comment>
<comment type="pathway">
    <text evidence="1">Cofactor biosynthesis; coenzyme F420 biosynthesis.</text>
</comment>
<comment type="subunit">
    <text evidence="1">Homodimer.</text>
</comment>
<comment type="similarity">
    <text evidence="1">Belongs to the CofD family.</text>
</comment>
<accession>B2HEN2</accession>
<proteinExistence type="inferred from homology"/>
<feature type="chain" id="PRO_1000139981" description="Phosphoenolpyruvate transferase">
    <location>
        <begin position="1"/>
        <end position="329"/>
    </location>
</feature>
<feature type="binding site" evidence="1">
    <location>
        <position position="61"/>
    </location>
    <ligand>
        <name>7,8-didemethyl-8-hydroxy-5-deazariboflavin</name>
        <dbReference type="ChEBI" id="CHEBI:59904"/>
    </ligand>
</feature>
<protein>
    <recommendedName>
        <fullName evidence="1">Phosphoenolpyruvate transferase</fullName>
        <ecNumber evidence="1">2.7.8.28</ecNumber>
    </recommendedName>
    <alternativeName>
        <fullName evidence="1">EPPG:FO PEP transferase</fullName>
    </alternativeName>
</protein>
<evidence type="ECO:0000255" key="1">
    <source>
        <dbReference type="HAMAP-Rule" id="MF_01257"/>
    </source>
</evidence>
<sequence length="329" mass="35393">MKLTVLVGGVGGARFLLGAQRLLGLGQFATPDDNARHELTAVVNIGDDAWIHGLRICPDLDTCMYTLGGGVDPQRGWGHRDETWHAKEELARYGVQPDWFQLGDRDLATHLVRTQMLRAGYPLAQITTALCDRWQPGATLLPVSNDRCETHVVVTDPTDQQQRAIHFQEWWVRYRAELPTHSFVFIGTETASATTEVTAAIADADVVMLAPSNPVVSIGAILAVPGIRAALRATRAPIIGYSPIIAGKPVRGMADACLSVIGVDTTAEAVGRHYGARAATGVLDYWLVAEGDQAEIDSVTVRSIPLLMSDPEATAQMVRAGLELAGVTV</sequence>
<keyword id="KW-0460">Magnesium</keyword>
<keyword id="KW-1185">Reference proteome</keyword>
<keyword id="KW-0808">Transferase</keyword>
<dbReference type="EC" id="2.7.8.28" evidence="1"/>
<dbReference type="EMBL" id="CP000854">
    <property type="protein sequence ID" value="ACC39739.1"/>
    <property type="molecule type" value="Genomic_DNA"/>
</dbReference>
<dbReference type="RefSeq" id="WP_012393152.1">
    <property type="nucleotide sequence ID" value="NC_010612.1"/>
</dbReference>
<dbReference type="SMR" id="B2HEN2"/>
<dbReference type="STRING" id="216594.MMAR_1281"/>
<dbReference type="KEGG" id="mmi:MMAR_1281"/>
<dbReference type="eggNOG" id="COG0391">
    <property type="taxonomic scope" value="Bacteria"/>
</dbReference>
<dbReference type="HOGENOM" id="CLU_055795_0_0_11"/>
<dbReference type="OrthoDB" id="7466225at2"/>
<dbReference type="UniPathway" id="UPA00071"/>
<dbReference type="Proteomes" id="UP000001190">
    <property type="component" value="Chromosome"/>
</dbReference>
<dbReference type="GO" id="GO:0043743">
    <property type="term" value="F:LPPG:FO 2-phospho-L-lactate transferase activity"/>
    <property type="evidence" value="ECO:0007669"/>
    <property type="project" value="UniProtKB-EC"/>
</dbReference>
<dbReference type="GO" id="GO:0000287">
    <property type="term" value="F:magnesium ion binding"/>
    <property type="evidence" value="ECO:0007669"/>
    <property type="project" value="InterPro"/>
</dbReference>
<dbReference type="GO" id="GO:0052645">
    <property type="term" value="P:F420-0 metabolic process"/>
    <property type="evidence" value="ECO:0007669"/>
    <property type="project" value="UniProtKB-UniRule"/>
</dbReference>
<dbReference type="CDD" id="cd07186">
    <property type="entry name" value="CofD_like"/>
    <property type="match status" value="1"/>
</dbReference>
<dbReference type="FunFam" id="1.10.8.240:FF:000001">
    <property type="entry name" value="2-phospho-L-lactate transferase"/>
    <property type="match status" value="1"/>
</dbReference>
<dbReference type="Gene3D" id="1.10.8.240">
    <property type="entry name" value="CofD-like domain"/>
    <property type="match status" value="1"/>
</dbReference>
<dbReference type="Gene3D" id="3.40.50.10680">
    <property type="entry name" value="CofD-like domains"/>
    <property type="match status" value="1"/>
</dbReference>
<dbReference type="HAMAP" id="MF_01257">
    <property type="entry name" value="CofD"/>
    <property type="match status" value="1"/>
</dbReference>
<dbReference type="InterPro" id="IPR002882">
    <property type="entry name" value="CofD"/>
</dbReference>
<dbReference type="InterPro" id="IPR038136">
    <property type="entry name" value="CofD-like_dom_sf"/>
</dbReference>
<dbReference type="InterPro" id="IPR010115">
    <property type="entry name" value="FbiA/CofD"/>
</dbReference>
<dbReference type="NCBIfam" id="TIGR01819">
    <property type="entry name" value="F420_cofD"/>
    <property type="match status" value="1"/>
</dbReference>
<dbReference type="PANTHER" id="PTHR43007">
    <property type="entry name" value="2-PHOSPHO-L-LACTATE TRANSFERASE"/>
    <property type="match status" value="1"/>
</dbReference>
<dbReference type="PANTHER" id="PTHR43007:SF1">
    <property type="entry name" value="2-PHOSPHO-L-LACTATE TRANSFERASE"/>
    <property type="match status" value="1"/>
</dbReference>
<dbReference type="Pfam" id="PF01933">
    <property type="entry name" value="CofD"/>
    <property type="match status" value="1"/>
</dbReference>
<dbReference type="SUPFAM" id="SSF142338">
    <property type="entry name" value="CofD-like"/>
    <property type="match status" value="1"/>
</dbReference>
<gene>
    <name evidence="1" type="primary">fbiA</name>
    <name type="ordered locus">MMAR_1281</name>
</gene>
<reference key="1">
    <citation type="journal article" date="2008" name="Genome Res.">
        <title>Insights from the complete genome sequence of Mycobacterium marinum on the evolution of Mycobacterium tuberculosis.</title>
        <authorList>
            <person name="Stinear T.P."/>
            <person name="Seemann T."/>
            <person name="Harrison P.F."/>
            <person name="Jenkin G.A."/>
            <person name="Davies J.K."/>
            <person name="Johnson P.D."/>
            <person name="Abdellah Z."/>
            <person name="Arrowsmith C."/>
            <person name="Chillingworth T."/>
            <person name="Churcher C."/>
            <person name="Clarke K."/>
            <person name="Cronin A."/>
            <person name="Davis P."/>
            <person name="Goodhead I."/>
            <person name="Holroyd N."/>
            <person name="Jagels K."/>
            <person name="Lord A."/>
            <person name="Moule S."/>
            <person name="Mungall K."/>
            <person name="Norbertczak H."/>
            <person name="Quail M.A."/>
            <person name="Rabbinowitsch E."/>
            <person name="Walker D."/>
            <person name="White B."/>
            <person name="Whitehead S."/>
            <person name="Small P.L."/>
            <person name="Brosch R."/>
            <person name="Ramakrishnan L."/>
            <person name="Fischbach M.A."/>
            <person name="Parkhill J."/>
            <person name="Cole S.T."/>
        </authorList>
    </citation>
    <scope>NUCLEOTIDE SEQUENCE [LARGE SCALE GENOMIC DNA]</scope>
    <source>
        <strain>ATCC BAA-535 / M</strain>
    </source>
</reference>